<dbReference type="EMBL" id="CP000266">
    <property type="protein sequence ID" value="ABF05267.1"/>
    <property type="molecule type" value="Genomic_DNA"/>
</dbReference>
<dbReference type="RefSeq" id="WP_000271401.1">
    <property type="nucleotide sequence ID" value="NC_008258.1"/>
</dbReference>
<dbReference type="SMR" id="Q0T098"/>
<dbReference type="GeneID" id="93778795"/>
<dbReference type="KEGG" id="sfv:SFV_3216"/>
<dbReference type="HOGENOM" id="CLU_061463_3_3_6"/>
<dbReference type="Proteomes" id="UP000000659">
    <property type="component" value="Chromosome"/>
</dbReference>
<dbReference type="GO" id="GO:0005737">
    <property type="term" value="C:cytoplasm"/>
    <property type="evidence" value="ECO:0007669"/>
    <property type="project" value="UniProtKB-ARBA"/>
</dbReference>
<dbReference type="GO" id="GO:1990904">
    <property type="term" value="C:ribonucleoprotein complex"/>
    <property type="evidence" value="ECO:0007669"/>
    <property type="project" value="UniProtKB-KW"/>
</dbReference>
<dbReference type="GO" id="GO:0005840">
    <property type="term" value="C:ribosome"/>
    <property type="evidence" value="ECO:0007669"/>
    <property type="project" value="UniProtKB-KW"/>
</dbReference>
<dbReference type="GO" id="GO:0019843">
    <property type="term" value="F:rRNA binding"/>
    <property type="evidence" value="ECO:0007669"/>
    <property type="project" value="UniProtKB-UniRule"/>
</dbReference>
<dbReference type="GO" id="GO:0003735">
    <property type="term" value="F:structural constituent of ribosome"/>
    <property type="evidence" value="ECO:0007669"/>
    <property type="project" value="InterPro"/>
</dbReference>
<dbReference type="GO" id="GO:0006412">
    <property type="term" value="P:translation"/>
    <property type="evidence" value="ECO:0007669"/>
    <property type="project" value="UniProtKB-UniRule"/>
</dbReference>
<dbReference type="HAMAP" id="MF_01363">
    <property type="entry name" value="Ribosomal_bL21"/>
    <property type="match status" value="1"/>
</dbReference>
<dbReference type="InterPro" id="IPR028909">
    <property type="entry name" value="bL21-like"/>
</dbReference>
<dbReference type="InterPro" id="IPR036164">
    <property type="entry name" value="bL21-like_sf"/>
</dbReference>
<dbReference type="InterPro" id="IPR001787">
    <property type="entry name" value="Ribosomal_bL21"/>
</dbReference>
<dbReference type="InterPro" id="IPR018258">
    <property type="entry name" value="Ribosomal_bL21_CS"/>
</dbReference>
<dbReference type="NCBIfam" id="TIGR00061">
    <property type="entry name" value="L21"/>
    <property type="match status" value="1"/>
</dbReference>
<dbReference type="PANTHER" id="PTHR21349">
    <property type="entry name" value="50S RIBOSOMAL PROTEIN L21"/>
    <property type="match status" value="1"/>
</dbReference>
<dbReference type="PANTHER" id="PTHR21349:SF0">
    <property type="entry name" value="LARGE RIBOSOMAL SUBUNIT PROTEIN BL21M"/>
    <property type="match status" value="1"/>
</dbReference>
<dbReference type="Pfam" id="PF00829">
    <property type="entry name" value="Ribosomal_L21p"/>
    <property type="match status" value="1"/>
</dbReference>
<dbReference type="SUPFAM" id="SSF141091">
    <property type="entry name" value="L21p-like"/>
    <property type="match status" value="1"/>
</dbReference>
<dbReference type="PROSITE" id="PS01169">
    <property type="entry name" value="RIBOSOMAL_L21"/>
    <property type="match status" value="1"/>
</dbReference>
<organism>
    <name type="scientific">Shigella flexneri serotype 5b (strain 8401)</name>
    <dbReference type="NCBI Taxonomy" id="373384"/>
    <lineage>
        <taxon>Bacteria</taxon>
        <taxon>Pseudomonadati</taxon>
        <taxon>Pseudomonadota</taxon>
        <taxon>Gammaproteobacteria</taxon>
        <taxon>Enterobacterales</taxon>
        <taxon>Enterobacteriaceae</taxon>
        <taxon>Shigella</taxon>
    </lineage>
</organism>
<keyword id="KW-0687">Ribonucleoprotein</keyword>
<keyword id="KW-0689">Ribosomal protein</keyword>
<keyword id="KW-0694">RNA-binding</keyword>
<keyword id="KW-0699">rRNA-binding</keyword>
<comment type="function">
    <text evidence="1">This protein binds to 23S rRNA in the presence of protein L20.</text>
</comment>
<comment type="subunit">
    <text evidence="1">Part of the 50S ribosomal subunit. Contacts protein L20.</text>
</comment>
<comment type="similarity">
    <text evidence="1">Belongs to the bacterial ribosomal protein bL21 family.</text>
</comment>
<name>RL21_SHIF8</name>
<accession>Q0T098</accession>
<protein>
    <recommendedName>
        <fullName evidence="1">Large ribosomal subunit protein bL21</fullName>
    </recommendedName>
    <alternativeName>
        <fullName evidence="2">50S ribosomal protein L21</fullName>
    </alternativeName>
</protein>
<sequence length="103" mass="11564">MYAVFQSGGKQHRVSEGQTVRLEKLDIATGETVEFAEVLMIANGEEVKIGVPFVDGGVIKAEVVAHGRGEKVKIVKFRRRKHYRKQQGHRQWFTDVKITGISA</sequence>
<reference key="1">
    <citation type="journal article" date="2006" name="BMC Genomics">
        <title>Complete genome sequence of Shigella flexneri 5b and comparison with Shigella flexneri 2a.</title>
        <authorList>
            <person name="Nie H."/>
            <person name="Yang F."/>
            <person name="Zhang X."/>
            <person name="Yang J."/>
            <person name="Chen L."/>
            <person name="Wang J."/>
            <person name="Xiong Z."/>
            <person name="Peng J."/>
            <person name="Sun L."/>
            <person name="Dong J."/>
            <person name="Xue Y."/>
            <person name="Xu X."/>
            <person name="Chen S."/>
            <person name="Yao Z."/>
            <person name="Shen Y."/>
            <person name="Jin Q."/>
        </authorList>
    </citation>
    <scope>NUCLEOTIDE SEQUENCE [LARGE SCALE GENOMIC DNA]</scope>
    <source>
        <strain>8401</strain>
    </source>
</reference>
<feature type="chain" id="PRO_1000067900" description="Large ribosomal subunit protein bL21">
    <location>
        <begin position="1"/>
        <end position="103"/>
    </location>
</feature>
<gene>
    <name evidence="1" type="primary">rplU</name>
    <name type="ordered locus">SFV_3216</name>
</gene>
<evidence type="ECO:0000255" key="1">
    <source>
        <dbReference type="HAMAP-Rule" id="MF_01363"/>
    </source>
</evidence>
<evidence type="ECO:0000305" key="2"/>
<proteinExistence type="inferred from homology"/>